<proteinExistence type="inferred from homology"/>
<protein>
    <recommendedName>
        <fullName evidence="1">Small ribosomal subunit protein uS2</fullName>
    </recommendedName>
    <alternativeName>
        <fullName evidence="3">30S ribosomal protein S2</fullName>
    </alternativeName>
</protein>
<gene>
    <name evidence="1" type="primary">rpsB</name>
    <name type="ordered locus">WD_0532</name>
</gene>
<name>RS2_WOLPM</name>
<keyword id="KW-0687">Ribonucleoprotein</keyword>
<keyword id="KW-0689">Ribosomal protein</keyword>
<evidence type="ECO:0000255" key="1">
    <source>
        <dbReference type="HAMAP-Rule" id="MF_00291"/>
    </source>
</evidence>
<evidence type="ECO:0000256" key="2">
    <source>
        <dbReference type="SAM" id="MobiDB-lite"/>
    </source>
</evidence>
<evidence type="ECO:0000305" key="3"/>
<accession>Q73HM1</accession>
<dbReference type="EMBL" id="AE017196">
    <property type="protein sequence ID" value="AAS14244.1"/>
    <property type="molecule type" value="Genomic_DNA"/>
</dbReference>
<dbReference type="RefSeq" id="WP_010962661.1">
    <property type="nucleotide sequence ID" value="NZ_OX384529.1"/>
</dbReference>
<dbReference type="SMR" id="Q73HM1"/>
<dbReference type="EnsemblBacteria" id="AAS14244">
    <property type="protein sequence ID" value="AAS14244"/>
    <property type="gene ID" value="WD_0532"/>
</dbReference>
<dbReference type="GeneID" id="70036017"/>
<dbReference type="KEGG" id="wol:WD_0532"/>
<dbReference type="eggNOG" id="COG0052">
    <property type="taxonomic scope" value="Bacteria"/>
</dbReference>
<dbReference type="Proteomes" id="UP000008215">
    <property type="component" value="Chromosome"/>
</dbReference>
<dbReference type="GO" id="GO:0022627">
    <property type="term" value="C:cytosolic small ribosomal subunit"/>
    <property type="evidence" value="ECO:0007669"/>
    <property type="project" value="TreeGrafter"/>
</dbReference>
<dbReference type="GO" id="GO:0003735">
    <property type="term" value="F:structural constituent of ribosome"/>
    <property type="evidence" value="ECO:0007669"/>
    <property type="project" value="InterPro"/>
</dbReference>
<dbReference type="GO" id="GO:0006412">
    <property type="term" value="P:translation"/>
    <property type="evidence" value="ECO:0007669"/>
    <property type="project" value="UniProtKB-UniRule"/>
</dbReference>
<dbReference type="CDD" id="cd01425">
    <property type="entry name" value="RPS2"/>
    <property type="match status" value="1"/>
</dbReference>
<dbReference type="Gene3D" id="3.40.50.10490">
    <property type="entry name" value="Glucose-6-phosphate isomerase like protein, domain 1"/>
    <property type="match status" value="1"/>
</dbReference>
<dbReference type="Gene3D" id="1.10.287.610">
    <property type="entry name" value="Helix hairpin bin"/>
    <property type="match status" value="1"/>
</dbReference>
<dbReference type="HAMAP" id="MF_00291_B">
    <property type="entry name" value="Ribosomal_uS2_B"/>
    <property type="match status" value="1"/>
</dbReference>
<dbReference type="InterPro" id="IPR001865">
    <property type="entry name" value="Ribosomal_uS2"/>
</dbReference>
<dbReference type="InterPro" id="IPR005706">
    <property type="entry name" value="Ribosomal_uS2_bac/mit/plastid"/>
</dbReference>
<dbReference type="InterPro" id="IPR018130">
    <property type="entry name" value="Ribosomal_uS2_CS"/>
</dbReference>
<dbReference type="InterPro" id="IPR023591">
    <property type="entry name" value="Ribosomal_uS2_flav_dom_sf"/>
</dbReference>
<dbReference type="NCBIfam" id="TIGR01011">
    <property type="entry name" value="rpsB_bact"/>
    <property type="match status" value="1"/>
</dbReference>
<dbReference type="PANTHER" id="PTHR12534">
    <property type="entry name" value="30S RIBOSOMAL PROTEIN S2 PROKARYOTIC AND ORGANELLAR"/>
    <property type="match status" value="1"/>
</dbReference>
<dbReference type="PANTHER" id="PTHR12534:SF0">
    <property type="entry name" value="SMALL RIBOSOMAL SUBUNIT PROTEIN US2M"/>
    <property type="match status" value="1"/>
</dbReference>
<dbReference type="Pfam" id="PF00318">
    <property type="entry name" value="Ribosomal_S2"/>
    <property type="match status" value="1"/>
</dbReference>
<dbReference type="PRINTS" id="PR00395">
    <property type="entry name" value="RIBOSOMALS2"/>
</dbReference>
<dbReference type="SUPFAM" id="SSF52313">
    <property type="entry name" value="Ribosomal protein S2"/>
    <property type="match status" value="1"/>
</dbReference>
<dbReference type="PROSITE" id="PS00963">
    <property type="entry name" value="RIBOSOMAL_S2_2"/>
    <property type="match status" value="1"/>
</dbReference>
<sequence>MTNLPKVTVRDLAESGVHFGHKISRWNAKMAPYIYGVHQENRIHIIDLRKTLPLLQVAMKALYDVAFQGGRILFVGTKFQAFDIIASEAIRCGQYYVNHRWLGGMLTNWGTVSSSIKTLMQYEKILNDEDSILTKKELGNIEKKKQKLDKALGGIREMGAIPDILFIIDTNKEHIAVKEAKKLGIPIVAILDTNSDPDGITYLIPGNDDSRKSIELYCKLATDSILAGIESSLAKSGVKIDDIRGDEFIQEKEDGIVQTKRRRSKVYKEEEREVVTNEDESR</sequence>
<reference key="1">
    <citation type="journal article" date="2004" name="PLoS Biol.">
        <title>Phylogenomics of the reproductive parasite Wolbachia pipientis wMel: a streamlined genome overrun by mobile genetic elements.</title>
        <authorList>
            <person name="Wu M."/>
            <person name="Sun L.V."/>
            <person name="Vamathevan J.J."/>
            <person name="Riegler M."/>
            <person name="DeBoy R.T."/>
            <person name="Brownlie J.C."/>
            <person name="McGraw E.A."/>
            <person name="Martin W."/>
            <person name="Esser C."/>
            <person name="Ahmadinejad N."/>
            <person name="Wiegand C."/>
            <person name="Madupu R."/>
            <person name="Beanan M.J."/>
            <person name="Brinkac L.M."/>
            <person name="Daugherty S.C."/>
            <person name="Durkin A.S."/>
            <person name="Kolonay J.F."/>
            <person name="Nelson W.C."/>
            <person name="Mohamoud Y."/>
            <person name="Lee P."/>
            <person name="Berry K.J."/>
            <person name="Young M.B."/>
            <person name="Utterback T.R."/>
            <person name="Weidman J.F."/>
            <person name="Nierman W.C."/>
            <person name="Paulsen I.T."/>
            <person name="Nelson K.E."/>
            <person name="Tettelin H."/>
            <person name="O'Neill S.L."/>
            <person name="Eisen J.A."/>
        </authorList>
    </citation>
    <scope>NUCLEOTIDE SEQUENCE [LARGE SCALE GENOMIC DNA]</scope>
</reference>
<organism>
    <name type="scientific">Wolbachia pipientis wMel</name>
    <dbReference type="NCBI Taxonomy" id="163164"/>
    <lineage>
        <taxon>Bacteria</taxon>
        <taxon>Pseudomonadati</taxon>
        <taxon>Pseudomonadota</taxon>
        <taxon>Alphaproteobacteria</taxon>
        <taxon>Rickettsiales</taxon>
        <taxon>Anaplasmataceae</taxon>
        <taxon>Wolbachieae</taxon>
        <taxon>Wolbachia</taxon>
    </lineage>
</organism>
<comment type="similarity">
    <text evidence="1">Belongs to the universal ribosomal protein uS2 family.</text>
</comment>
<feature type="chain" id="PRO_0000134276" description="Small ribosomal subunit protein uS2">
    <location>
        <begin position="1"/>
        <end position="282"/>
    </location>
</feature>
<feature type="region of interest" description="Disordered" evidence="2">
    <location>
        <begin position="260"/>
        <end position="282"/>
    </location>
</feature>
<feature type="compositionally biased region" description="Basic and acidic residues" evidence="2">
    <location>
        <begin position="266"/>
        <end position="282"/>
    </location>
</feature>